<sequence>MVKRISILGSTGSIGTQTLDIVTHHPDAFQVVGLAAGGNVALLAQQVAEFRPEIVAIRQAEKLEDLKAAVAELTDYQPMYVVGEEGVVEVARYGDAESVVTGIVGCAGLLPTMAAIAAGKDIALANKETLIAGAPVVLPLVEKMGVKLLPADSEHSAIFQCLQGVPEGGLRRIILTASGGAFRDLPVERLPFVTVQDALKHPNWSMGQKITIDSATLMNKGLEVIEAHYLFGLDYDHIDIVIHPQSIIHSLIEVQDTSVLAQLGWPDMRLPLLYALSWPERIYTDWEPLDLVKAGSLSFREPDHDKYPCMQLAYGAGRAGGAMPAVLNAANEQAVALFLQEKISFLDIPRLIEKTCDLYVGQNTASPDLETILAADQWARRTVLENSACVATRP</sequence>
<proteinExistence type="inferred from homology"/>
<reference key="1">
    <citation type="journal article" date="1995" name="DNA Res.">
        <title>Sequence analysis of the genome of the unicellular cyanobacterium Synechocystis sp. strain PCC6803. I. Sequence features in the 1 Mb region from map positions 64% to 92% of the genome.</title>
        <authorList>
            <person name="Kaneko T."/>
            <person name="Tanaka A."/>
            <person name="Sato S."/>
            <person name="Kotani H."/>
            <person name="Sazuka T."/>
            <person name="Miyajima N."/>
            <person name="Sugiura M."/>
            <person name="Tabata S."/>
        </authorList>
    </citation>
    <scope>NUCLEOTIDE SEQUENCE [LARGE SCALE GENOMIC DNA]</scope>
    <source>
        <strain>ATCC 27184 / PCC 6803 / N-1</strain>
    </source>
</reference>
<reference key="2">
    <citation type="journal article" date="1996" name="DNA Res.">
        <title>Sequence analysis of the genome of the unicellular cyanobacterium Synechocystis sp. strain PCC6803. II. Sequence determination of the entire genome and assignment of potential protein-coding regions.</title>
        <authorList>
            <person name="Kaneko T."/>
            <person name="Sato S."/>
            <person name="Kotani H."/>
            <person name="Tanaka A."/>
            <person name="Asamizu E."/>
            <person name="Nakamura Y."/>
            <person name="Miyajima N."/>
            <person name="Hirosawa M."/>
            <person name="Sugiura M."/>
            <person name="Sasamoto S."/>
            <person name="Kimura T."/>
            <person name="Hosouchi T."/>
            <person name="Matsuno A."/>
            <person name="Muraki A."/>
            <person name="Nakazaki N."/>
            <person name="Naruo K."/>
            <person name="Okumura S."/>
            <person name="Shimpo S."/>
            <person name="Takeuchi C."/>
            <person name="Wada T."/>
            <person name="Watanabe A."/>
            <person name="Yamada M."/>
            <person name="Yasuda M."/>
            <person name="Tabata S."/>
        </authorList>
    </citation>
    <scope>NUCLEOTIDE SEQUENCE [LARGE SCALE GENOMIC DNA]</scope>
    <source>
        <strain>ATCC 27184 / PCC 6803 / Kazusa</strain>
    </source>
</reference>
<dbReference type="EC" id="1.1.1.267" evidence="1"/>
<dbReference type="EMBL" id="BA000022">
    <property type="protein sequence ID" value="BAA10183.1"/>
    <property type="molecule type" value="Genomic_DNA"/>
</dbReference>
<dbReference type="PIR" id="S76331">
    <property type="entry name" value="S76331"/>
</dbReference>
<dbReference type="SMR" id="Q55663"/>
<dbReference type="FunCoup" id="Q55663">
    <property type="interactions" value="464"/>
</dbReference>
<dbReference type="IntAct" id="Q55663">
    <property type="interactions" value="1"/>
</dbReference>
<dbReference type="STRING" id="1148.gene:10499680"/>
<dbReference type="BindingDB" id="Q55663"/>
<dbReference type="ChEMBL" id="CHEMBL4094"/>
<dbReference type="PaxDb" id="1148-1001556"/>
<dbReference type="EnsemblBacteria" id="BAA10183">
    <property type="protein sequence ID" value="BAA10183"/>
    <property type="gene ID" value="BAA10183"/>
</dbReference>
<dbReference type="KEGG" id="syn:sll0019"/>
<dbReference type="eggNOG" id="COG0743">
    <property type="taxonomic scope" value="Bacteria"/>
</dbReference>
<dbReference type="InParanoid" id="Q55663"/>
<dbReference type="PhylomeDB" id="Q55663"/>
<dbReference type="UniPathway" id="UPA00056">
    <property type="reaction ID" value="UER00092"/>
</dbReference>
<dbReference type="Proteomes" id="UP000001425">
    <property type="component" value="Chromosome"/>
</dbReference>
<dbReference type="GO" id="GO:0030604">
    <property type="term" value="F:1-deoxy-D-xylulose-5-phosphate reductoisomerase activity"/>
    <property type="evidence" value="ECO:0000318"/>
    <property type="project" value="GO_Central"/>
</dbReference>
<dbReference type="GO" id="GO:0030145">
    <property type="term" value="F:manganese ion binding"/>
    <property type="evidence" value="ECO:0000318"/>
    <property type="project" value="GO_Central"/>
</dbReference>
<dbReference type="GO" id="GO:0070402">
    <property type="term" value="F:NADPH binding"/>
    <property type="evidence" value="ECO:0000318"/>
    <property type="project" value="GO_Central"/>
</dbReference>
<dbReference type="GO" id="GO:0051484">
    <property type="term" value="P:isopentenyl diphosphate biosynthetic process, methylerythritol 4-phosphate pathway involved in terpenoid biosynthetic process"/>
    <property type="evidence" value="ECO:0000318"/>
    <property type="project" value="GO_Central"/>
</dbReference>
<dbReference type="FunFam" id="3.40.50.720:FF:000183">
    <property type="entry name" value="1-deoxy-D-xylulose 5-phosphate reductoisomerase, chloroplastic"/>
    <property type="match status" value="1"/>
</dbReference>
<dbReference type="Gene3D" id="1.10.1740.10">
    <property type="match status" value="1"/>
</dbReference>
<dbReference type="Gene3D" id="3.40.50.720">
    <property type="entry name" value="NAD(P)-binding Rossmann-like Domain"/>
    <property type="match status" value="1"/>
</dbReference>
<dbReference type="HAMAP" id="MF_00183">
    <property type="entry name" value="DXP_reductoisom"/>
    <property type="match status" value="1"/>
</dbReference>
<dbReference type="InterPro" id="IPR003821">
    <property type="entry name" value="DXP_reductoisomerase"/>
</dbReference>
<dbReference type="InterPro" id="IPR013644">
    <property type="entry name" value="DXP_reductoisomerase_C"/>
</dbReference>
<dbReference type="InterPro" id="IPR013512">
    <property type="entry name" value="DXP_reductoisomerase_N"/>
</dbReference>
<dbReference type="InterPro" id="IPR026877">
    <property type="entry name" value="DXPR_C"/>
</dbReference>
<dbReference type="InterPro" id="IPR036169">
    <property type="entry name" value="DXPR_C_sf"/>
</dbReference>
<dbReference type="InterPro" id="IPR036291">
    <property type="entry name" value="NAD(P)-bd_dom_sf"/>
</dbReference>
<dbReference type="NCBIfam" id="TIGR00243">
    <property type="entry name" value="Dxr"/>
    <property type="match status" value="1"/>
</dbReference>
<dbReference type="NCBIfam" id="NF009114">
    <property type="entry name" value="PRK12464.1"/>
    <property type="match status" value="1"/>
</dbReference>
<dbReference type="PANTHER" id="PTHR30525">
    <property type="entry name" value="1-DEOXY-D-XYLULOSE 5-PHOSPHATE REDUCTOISOMERASE"/>
    <property type="match status" value="1"/>
</dbReference>
<dbReference type="PANTHER" id="PTHR30525:SF0">
    <property type="entry name" value="1-DEOXY-D-XYLULOSE 5-PHOSPHATE REDUCTOISOMERASE, CHLOROPLASTIC"/>
    <property type="match status" value="1"/>
</dbReference>
<dbReference type="Pfam" id="PF08436">
    <property type="entry name" value="DXP_redisom_C"/>
    <property type="match status" value="1"/>
</dbReference>
<dbReference type="Pfam" id="PF02670">
    <property type="entry name" value="DXP_reductoisom"/>
    <property type="match status" value="1"/>
</dbReference>
<dbReference type="Pfam" id="PF13288">
    <property type="entry name" value="DXPR_C"/>
    <property type="match status" value="1"/>
</dbReference>
<dbReference type="PIRSF" id="PIRSF006205">
    <property type="entry name" value="Dxp_reductismrs"/>
    <property type="match status" value="1"/>
</dbReference>
<dbReference type="SUPFAM" id="SSF69055">
    <property type="entry name" value="1-deoxy-D-xylulose-5-phosphate reductoisomerase, C-terminal domain"/>
    <property type="match status" value="1"/>
</dbReference>
<dbReference type="SUPFAM" id="SSF55347">
    <property type="entry name" value="Glyceraldehyde-3-phosphate dehydrogenase-like, C-terminal domain"/>
    <property type="match status" value="1"/>
</dbReference>
<dbReference type="SUPFAM" id="SSF51735">
    <property type="entry name" value="NAD(P)-binding Rossmann-fold domains"/>
    <property type="match status" value="1"/>
</dbReference>
<gene>
    <name evidence="1" type="primary">dxr</name>
    <name type="ordered locus">sll0019</name>
</gene>
<keyword id="KW-0414">Isoprene biosynthesis</keyword>
<keyword id="KW-0464">Manganese</keyword>
<keyword id="KW-0479">Metal-binding</keyword>
<keyword id="KW-0521">NADP</keyword>
<keyword id="KW-0560">Oxidoreductase</keyword>
<keyword id="KW-1185">Reference proteome</keyword>
<feature type="chain" id="PRO_0000163721" description="1-deoxy-D-xylulose 5-phosphate reductoisomerase">
    <location>
        <begin position="1"/>
        <end position="394"/>
    </location>
</feature>
<feature type="binding site" evidence="1">
    <location>
        <position position="11"/>
    </location>
    <ligand>
        <name>NADPH</name>
        <dbReference type="ChEBI" id="CHEBI:57783"/>
    </ligand>
</feature>
<feature type="binding site" evidence="1">
    <location>
        <position position="12"/>
    </location>
    <ligand>
        <name>NADPH</name>
        <dbReference type="ChEBI" id="CHEBI:57783"/>
    </ligand>
</feature>
<feature type="binding site" evidence="1">
    <location>
        <position position="13"/>
    </location>
    <ligand>
        <name>NADPH</name>
        <dbReference type="ChEBI" id="CHEBI:57783"/>
    </ligand>
</feature>
<feature type="binding site" evidence="1">
    <location>
        <position position="14"/>
    </location>
    <ligand>
        <name>NADPH</name>
        <dbReference type="ChEBI" id="CHEBI:57783"/>
    </ligand>
</feature>
<feature type="binding site" evidence="1">
    <location>
        <position position="37"/>
    </location>
    <ligand>
        <name>NADPH</name>
        <dbReference type="ChEBI" id="CHEBI:57783"/>
    </ligand>
</feature>
<feature type="binding site" evidence="1">
    <location>
        <position position="39"/>
    </location>
    <ligand>
        <name>NADPH</name>
        <dbReference type="ChEBI" id="CHEBI:57783"/>
    </ligand>
</feature>
<feature type="binding site" evidence="1">
    <location>
        <position position="126"/>
    </location>
    <ligand>
        <name>NADPH</name>
        <dbReference type="ChEBI" id="CHEBI:57783"/>
    </ligand>
</feature>
<feature type="binding site" evidence="1">
    <location>
        <position position="127"/>
    </location>
    <ligand>
        <name>1-deoxy-D-xylulose 5-phosphate</name>
        <dbReference type="ChEBI" id="CHEBI:57792"/>
    </ligand>
</feature>
<feature type="binding site" evidence="1">
    <location>
        <position position="128"/>
    </location>
    <ligand>
        <name>NADPH</name>
        <dbReference type="ChEBI" id="CHEBI:57783"/>
    </ligand>
</feature>
<feature type="binding site" evidence="1">
    <location>
        <position position="152"/>
    </location>
    <ligand>
        <name>Mn(2+)</name>
        <dbReference type="ChEBI" id="CHEBI:29035"/>
    </ligand>
</feature>
<feature type="binding site" evidence="1">
    <location>
        <position position="153"/>
    </location>
    <ligand>
        <name>1-deoxy-D-xylulose 5-phosphate</name>
        <dbReference type="ChEBI" id="CHEBI:57792"/>
    </ligand>
</feature>
<feature type="binding site" evidence="1">
    <location>
        <position position="154"/>
    </location>
    <ligand>
        <name>1-deoxy-D-xylulose 5-phosphate</name>
        <dbReference type="ChEBI" id="CHEBI:57792"/>
    </ligand>
</feature>
<feature type="binding site" evidence="1">
    <location>
        <position position="154"/>
    </location>
    <ligand>
        <name>Mn(2+)</name>
        <dbReference type="ChEBI" id="CHEBI:29035"/>
    </ligand>
</feature>
<feature type="binding site" evidence="1">
    <location>
        <position position="178"/>
    </location>
    <ligand>
        <name>1-deoxy-D-xylulose 5-phosphate</name>
        <dbReference type="ChEBI" id="CHEBI:57792"/>
    </ligand>
</feature>
<feature type="binding site" evidence="1">
    <location>
        <position position="201"/>
    </location>
    <ligand>
        <name>1-deoxy-D-xylulose 5-phosphate</name>
        <dbReference type="ChEBI" id="CHEBI:57792"/>
    </ligand>
</feature>
<feature type="binding site" evidence="1">
    <location>
        <position position="207"/>
    </location>
    <ligand>
        <name>NADPH</name>
        <dbReference type="ChEBI" id="CHEBI:57783"/>
    </ligand>
</feature>
<feature type="binding site" evidence="1">
    <location>
        <position position="214"/>
    </location>
    <ligand>
        <name>1-deoxy-D-xylulose 5-phosphate</name>
        <dbReference type="ChEBI" id="CHEBI:57792"/>
    </ligand>
</feature>
<feature type="binding site" evidence="1">
    <location>
        <position position="219"/>
    </location>
    <ligand>
        <name>1-deoxy-D-xylulose 5-phosphate</name>
        <dbReference type="ChEBI" id="CHEBI:57792"/>
    </ligand>
</feature>
<feature type="binding site" evidence="1">
    <location>
        <position position="220"/>
    </location>
    <ligand>
        <name>1-deoxy-D-xylulose 5-phosphate</name>
        <dbReference type="ChEBI" id="CHEBI:57792"/>
    </ligand>
</feature>
<feature type="binding site" evidence="1">
    <location>
        <position position="223"/>
    </location>
    <ligand>
        <name>1-deoxy-D-xylulose 5-phosphate</name>
        <dbReference type="ChEBI" id="CHEBI:57792"/>
    </ligand>
</feature>
<feature type="binding site" evidence="1">
    <location>
        <position position="223"/>
    </location>
    <ligand>
        <name>Mn(2+)</name>
        <dbReference type="ChEBI" id="CHEBI:29035"/>
    </ligand>
</feature>
<organism>
    <name type="scientific">Synechocystis sp. (strain ATCC 27184 / PCC 6803 / Kazusa)</name>
    <dbReference type="NCBI Taxonomy" id="1111708"/>
    <lineage>
        <taxon>Bacteria</taxon>
        <taxon>Bacillati</taxon>
        <taxon>Cyanobacteriota</taxon>
        <taxon>Cyanophyceae</taxon>
        <taxon>Synechococcales</taxon>
        <taxon>Merismopediaceae</taxon>
        <taxon>Synechocystis</taxon>
    </lineage>
</organism>
<accession>Q55663</accession>
<protein>
    <recommendedName>
        <fullName evidence="1">1-deoxy-D-xylulose 5-phosphate reductoisomerase</fullName>
        <shortName evidence="1">DXP reductoisomerase</shortName>
        <ecNumber evidence="1">1.1.1.267</ecNumber>
    </recommendedName>
    <alternativeName>
        <fullName evidence="1">1-deoxyxylulose-5-phosphate reductoisomerase</fullName>
    </alternativeName>
    <alternativeName>
        <fullName evidence="1">2-C-methyl-D-erythritol 4-phosphate synthase</fullName>
    </alternativeName>
</protein>
<comment type="function">
    <text evidence="1">Catalyzes the NADPH-dependent rearrangement and reduction of 1-deoxy-D-xylulose-5-phosphate (DXP) to 2-C-methyl-D-erythritol 4-phosphate (MEP).</text>
</comment>
<comment type="catalytic activity">
    <reaction evidence="1">
        <text>2-C-methyl-D-erythritol 4-phosphate + NADP(+) = 1-deoxy-D-xylulose 5-phosphate + NADPH + H(+)</text>
        <dbReference type="Rhea" id="RHEA:13717"/>
        <dbReference type="ChEBI" id="CHEBI:15378"/>
        <dbReference type="ChEBI" id="CHEBI:57783"/>
        <dbReference type="ChEBI" id="CHEBI:57792"/>
        <dbReference type="ChEBI" id="CHEBI:58262"/>
        <dbReference type="ChEBI" id="CHEBI:58349"/>
        <dbReference type="EC" id="1.1.1.267"/>
    </reaction>
    <physiologicalReaction direction="right-to-left" evidence="1">
        <dbReference type="Rhea" id="RHEA:13719"/>
    </physiologicalReaction>
</comment>
<comment type="cofactor">
    <cofactor evidence="1">
        <name>Mg(2+)</name>
        <dbReference type="ChEBI" id="CHEBI:18420"/>
    </cofactor>
    <cofactor evidence="1">
        <name>Mn(2+)</name>
        <dbReference type="ChEBI" id="CHEBI:29035"/>
    </cofactor>
</comment>
<comment type="pathway">
    <text evidence="1">Isoprenoid biosynthesis; isopentenyl diphosphate biosynthesis via DXP pathway; isopentenyl diphosphate from 1-deoxy-D-xylulose 5-phosphate: step 1/6.</text>
</comment>
<comment type="similarity">
    <text evidence="1">Belongs to the DXR family.</text>
</comment>
<name>DXR_SYNY3</name>
<evidence type="ECO:0000255" key="1">
    <source>
        <dbReference type="HAMAP-Rule" id="MF_00183"/>
    </source>
</evidence>